<accession>P32574</accession>
<dbReference type="PIR" id="C60078">
    <property type="entry name" value="VCVSWM"/>
</dbReference>
<dbReference type="SMR" id="P32574"/>
<dbReference type="GO" id="GO:0019028">
    <property type="term" value="C:viral capsid"/>
    <property type="evidence" value="ECO:0007669"/>
    <property type="project" value="UniProtKB-KW"/>
</dbReference>
<dbReference type="InterPro" id="IPR001592">
    <property type="entry name" value="Poty_coat"/>
</dbReference>
<dbReference type="Pfam" id="PF00767">
    <property type="entry name" value="Poty_coat"/>
    <property type="match status" value="1"/>
</dbReference>
<comment type="function">
    <molecule>Capsid protein</molecule>
    <text evidence="2">Involved in aphid transmission, cell-to-cell and systemis movement, encapsidation of the viral RNA and in the regulation of viral RNA amplification.</text>
</comment>
<comment type="subcellular location">
    <molecule>Capsid protein</molecule>
    <subcellularLocation>
        <location evidence="4">Virion</location>
    </subcellularLocation>
</comment>
<comment type="PTM">
    <text evidence="1">Genome polyprotein of potyviruses undergoes post-translational proteolytic processing by the main proteinase NIa-pro resulting in the production of at least ten individual proteins. The P1 proteinase and the HC-pro cleave only their respective C-termini autocatalytically. 6K1 is essential for proper proteolytic separation of P3 from CI (By similarity).</text>
</comment>
<comment type="similarity">
    <text evidence="4">Belongs to the potyviridae genome polyprotein family.</text>
</comment>
<name>POLG_PWVMI</name>
<sequence>KDEIIDAGIDGKKGGGKKDTQDAGESNKGKEKDKDINAGSKGSGVPRLQKITKKMNLPMVKGSMVLDLDHLIEYKPDQTKLFNTRATDAQFATWYEGVKAEYELSDDQMGVIMNPFMVWCIENGTSPDINGVWVMMDGDEQVEYPLKPMVENAKPTLRQIMHHFSDAAEAYIEMRCASGPYMPRYGLLRNLRDKNLARYAFDFYEVNAKTSDRAREAVSGEKAAALSNVTNKLFGLDGNVATISEDTERHTARDVNQNMHTLLGMGAPQ</sequence>
<feature type="chain" id="PRO_0000040425" description="Capsid protein" evidence="1">
    <location>
        <begin position="1"/>
        <end position="269"/>
    </location>
</feature>
<feature type="region of interest" description="Disordered" evidence="3">
    <location>
        <begin position="1"/>
        <end position="45"/>
    </location>
</feature>
<feature type="compositionally biased region" description="Basic and acidic residues" evidence="3">
    <location>
        <begin position="9"/>
        <end position="36"/>
    </location>
</feature>
<feature type="non-terminal residue">
    <location>
        <position position="1"/>
    </location>
</feature>
<reference key="1">
    <citation type="journal article" date="1988" name="Arch. Virol.">
        <title>Coat protein of potyviruses. 5. Symptomatology, serology, and coat protein sequences of three strains of passionfruit woodiness virus.</title>
        <authorList>
            <person name="Shukla D.D."/>
            <person name="McKern N.M."/>
            <person name="Ward C.W."/>
        </authorList>
    </citation>
    <scope>NUCLEOTIDE SEQUENCE</scope>
</reference>
<reference key="2">
    <citation type="journal article" date="2001" name="Virus Res.">
        <title>Potyvirus proteins: a wealth of functions.</title>
        <authorList>
            <person name="Urcuqui-Inchima S."/>
            <person name="Haenni A.L."/>
            <person name="Bernardi F."/>
        </authorList>
    </citation>
    <scope>REVIEW</scope>
</reference>
<evidence type="ECO:0000250" key="1"/>
<evidence type="ECO:0000250" key="2">
    <source>
        <dbReference type="UniProtKB" id="P04517"/>
    </source>
</evidence>
<evidence type="ECO:0000256" key="3">
    <source>
        <dbReference type="SAM" id="MobiDB-lite"/>
    </source>
</evidence>
<evidence type="ECO:0000305" key="4"/>
<organismHost>
    <name type="scientific">Arachis hypogaea</name>
    <name type="common">Peanut</name>
    <dbReference type="NCBI Taxonomy" id="3818"/>
</organismHost>
<organismHost>
    <name type="scientific">Centrosema pubescens</name>
    <dbReference type="NCBI Taxonomy" id="185703"/>
</organismHost>
<organismHost>
    <name type="scientific">Glycine max</name>
    <name type="common">Soybean</name>
    <name type="synonym">Glycine hispida</name>
    <dbReference type="NCBI Taxonomy" id="3847"/>
</organismHost>
<organismHost>
    <name type="scientific">Lens culinaris</name>
    <name type="common">Lentil</name>
    <name type="synonym">Cicer lens</name>
    <dbReference type="NCBI Taxonomy" id="3864"/>
</organismHost>
<organismHost>
    <name type="scientific">Macroptilium atropurpureum</name>
    <dbReference type="NCBI Taxonomy" id="90550"/>
</organismHost>
<organismHost>
    <name type="scientific">Passiflora aurantia</name>
    <name type="common">Orange-petaled passion flower</name>
    <dbReference type="NCBI Taxonomy" id="237841"/>
</organismHost>
<organismHost>
    <name type="scientific">Passiflora edulis</name>
    <name type="common">Passion fruit</name>
    <dbReference type="NCBI Taxonomy" id="78168"/>
</organismHost>
<organismHost>
    <name type="scientific">Passiflora nitida</name>
    <name type="common">Bell apple</name>
    <name type="synonym">Passion flower</name>
    <dbReference type="NCBI Taxonomy" id="237871"/>
</organismHost>
<organismHost>
    <name type="scientific">Passiflora suberosa</name>
    <name type="common">Corky-stemmed passion flower</name>
    <dbReference type="NCBI Taxonomy" id="133504"/>
</organismHost>
<organismHost>
    <name type="scientific">Phaseolus vulgaris</name>
    <name type="common">Kidney bean</name>
    <name type="synonym">French bean</name>
    <dbReference type="NCBI Taxonomy" id="3885"/>
</organismHost>
<protein>
    <recommendedName>
        <fullName>Genome polyprotein</fullName>
    </recommendedName>
    <component>
        <recommendedName>
            <fullName>Capsid protein</fullName>
            <shortName>CP</shortName>
        </recommendedName>
        <alternativeName>
            <fullName>Coat protein</fullName>
        </alternativeName>
    </component>
</protein>
<proteinExistence type="inferred from homology"/>
<keyword id="KW-0167">Capsid protein</keyword>
<keyword id="KW-0946">Virion</keyword>
<organism>
    <name type="scientific">Passionfruit woodiness virus (strain Mild)</name>
    <name type="common">PWV</name>
    <dbReference type="NCBI Taxonomy" id="31733"/>
    <lineage>
        <taxon>Viruses</taxon>
        <taxon>Riboviria</taxon>
        <taxon>Orthornavirae</taxon>
        <taxon>Pisuviricota</taxon>
        <taxon>Stelpaviricetes</taxon>
        <taxon>Patatavirales</taxon>
        <taxon>Potyviridae</taxon>
        <taxon>Potyvirus</taxon>
        <taxon>Potyvirus passiflorae</taxon>
        <taxon>Passion fruit woodiness virus</taxon>
    </lineage>
</organism>